<dbReference type="EMBL" id="D00475">
    <property type="protein sequence ID" value="BAA00367.1"/>
    <property type="molecule type" value="Genomic_DNA"/>
</dbReference>
<dbReference type="EMBL" id="X66539">
    <property type="protein sequence ID" value="CAA47146.1"/>
    <property type="molecule type" value="mRNA"/>
</dbReference>
<dbReference type="EMBL" id="AJ002278">
    <property type="protein sequence ID" value="CAA05290.1"/>
    <property type="molecule type" value="mRNA"/>
</dbReference>
<dbReference type="EMBL" id="L00981">
    <property type="protein sequence ID" value="AAA16275.1"/>
    <property type="molecule type" value="Genomic_DNA"/>
</dbReference>
<dbReference type="EMBL" id="AF329982">
    <property type="protein sequence ID" value="AAK53568.1"/>
    <property type="molecule type" value="Genomic_DNA"/>
</dbReference>
<dbReference type="EMBL" id="AF329983">
    <property type="protein sequence ID" value="AAK53569.1"/>
    <property type="molecule type" value="Genomic_DNA"/>
</dbReference>
<dbReference type="EMBL" id="AF329984">
    <property type="protein sequence ID" value="AAK53570.1"/>
    <property type="molecule type" value="Genomic_DNA"/>
</dbReference>
<dbReference type="EMBL" id="AF329985">
    <property type="protein sequence ID" value="AAK53571.1"/>
    <property type="molecule type" value="Genomic_DNA"/>
</dbReference>
<dbReference type="EMBL" id="AF329986">
    <property type="protein sequence ID" value="AAK53572.1"/>
    <property type="molecule type" value="Genomic_DNA"/>
</dbReference>
<dbReference type="EMBL" id="AF329987">
    <property type="protein sequence ID" value="AAK53573.1"/>
    <property type="molecule type" value="Genomic_DNA"/>
</dbReference>
<dbReference type="EMBL" id="AF269159">
    <property type="protein sequence ID" value="AAF82567.1"/>
    <property type="molecule type" value="mRNA"/>
</dbReference>
<dbReference type="EMBL" id="AF269160">
    <property type="protein sequence ID" value="AAF82568.1"/>
    <property type="molecule type" value="mRNA"/>
</dbReference>
<dbReference type="EMBL" id="AY427673">
    <property type="protein sequence ID" value="AAR91624.1"/>
    <property type="molecule type" value="Genomic_DNA"/>
</dbReference>
<dbReference type="EMBL" id="AY427674">
    <property type="protein sequence ID" value="AAR91625.1"/>
    <property type="molecule type" value="Genomic_DNA"/>
</dbReference>
<dbReference type="EMBL" id="AY427675">
    <property type="protein sequence ID" value="AAR91626.1"/>
    <property type="molecule type" value="Genomic_DNA"/>
</dbReference>
<dbReference type="EMBL" id="BX883046">
    <property type="protein sequence ID" value="CAE84003.1"/>
    <property type="molecule type" value="Genomic_DNA"/>
</dbReference>
<dbReference type="EMBL" id="BC107671">
    <property type="protein sequence ID" value="AAI07672.1"/>
    <property type="molecule type" value="mRNA"/>
</dbReference>
<dbReference type="EMBL" id="L19123">
    <property type="protein sequence ID" value="AAA42255.1"/>
    <property type="molecule type" value="Genomic_DNA"/>
</dbReference>
<dbReference type="PIR" id="JU0029">
    <property type="entry name" value="JU0029"/>
</dbReference>
<dbReference type="RefSeq" id="NP_036807.1">
    <property type="nucleotide sequence ID" value="NM_012675.3"/>
</dbReference>
<dbReference type="RefSeq" id="XP_008770997.1">
    <property type="nucleotide sequence ID" value="XM_008772775.2"/>
</dbReference>
<dbReference type="SMR" id="P16599"/>
<dbReference type="DIP" id="DIP-39461N"/>
<dbReference type="FunCoup" id="P16599">
    <property type="interactions" value="932"/>
</dbReference>
<dbReference type="IntAct" id="P16599">
    <property type="interactions" value="74"/>
</dbReference>
<dbReference type="STRING" id="10116.ENSRNOP00000001110"/>
<dbReference type="BindingDB" id="P16599"/>
<dbReference type="GlyCosmos" id="P16599">
    <property type="glycosylation" value="2 sites, No reported glycans"/>
</dbReference>
<dbReference type="GlyGen" id="P16599">
    <property type="glycosylation" value="2 sites"/>
</dbReference>
<dbReference type="PhosphoSitePlus" id="P16599"/>
<dbReference type="PaxDb" id="10116-ENSRNOP00000001110"/>
<dbReference type="Ensembl" id="ENSRNOT00000001110.6">
    <property type="protein sequence ID" value="ENSRNOP00000001110.3"/>
    <property type="gene ID" value="ENSRNOG00000070745.1"/>
</dbReference>
<dbReference type="GeneID" id="24835"/>
<dbReference type="KEGG" id="rno:24835"/>
<dbReference type="UCSC" id="RGD:3876">
    <property type="organism name" value="rat"/>
</dbReference>
<dbReference type="AGR" id="RGD:3876"/>
<dbReference type="CTD" id="7124"/>
<dbReference type="RGD" id="3876">
    <property type="gene designation" value="Tnf"/>
</dbReference>
<dbReference type="eggNOG" id="ENOG502S4K8">
    <property type="taxonomic scope" value="Eukaryota"/>
</dbReference>
<dbReference type="GeneTree" id="ENSGT01060000248544"/>
<dbReference type="HOGENOM" id="CLU_070352_3_1_1"/>
<dbReference type="InParanoid" id="P16599"/>
<dbReference type="OMA" id="GATMLFC"/>
<dbReference type="OrthoDB" id="9940698at2759"/>
<dbReference type="PhylomeDB" id="P16599"/>
<dbReference type="TreeFam" id="TF332169"/>
<dbReference type="Reactome" id="R-RNO-5357786">
    <property type="pathway name" value="TNFR1-induced proapoptotic signaling"/>
</dbReference>
<dbReference type="Reactome" id="R-RNO-5357905">
    <property type="pathway name" value="Regulation of TNFR1 signaling"/>
</dbReference>
<dbReference type="Reactome" id="R-RNO-5357956">
    <property type="pathway name" value="TNFR1-induced NF-kappa-B signaling pathway"/>
</dbReference>
<dbReference type="Reactome" id="R-RNO-5626978">
    <property type="pathway name" value="TNFR1-mediated ceramide production"/>
</dbReference>
<dbReference type="Reactome" id="R-RNO-5668541">
    <property type="pathway name" value="TNFR2 non-canonical NF-kB pathway"/>
</dbReference>
<dbReference type="Reactome" id="R-RNO-75893">
    <property type="pathway name" value="TNF signaling"/>
</dbReference>
<dbReference type="PRO" id="PR:P16599"/>
<dbReference type="Proteomes" id="UP000002494">
    <property type="component" value="Chromosome 20"/>
</dbReference>
<dbReference type="Bgee" id="ENSRNOG00000000837">
    <property type="expression patterns" value="Expressed in thymus and 4 other cell types or tissues"/>
</dbReference>
<dbReference type="GO" id="GO:0009986">
    <property type="term" value="C:cell surface"/>
    <property type="evidence" value="ECO:0000266"/>
    <property type="project" value="RGD"/>
</dbReference>
<dbReference type="GO" id="GO:0009897">
    <property type="term" value="C:external side of plasma membrane"/>
    <property type="evidence" value="ECO:0000314"/>
    <property type="project" value="RGD"/>
</dbReference>
<dbReference type="GO" id="GO:0005576">
    <property type="term" value="C:extracellular region"/>
    <property type="evidence" value="ECO:0000314"/>
    <property type="project" value="ARUK-UCL"/>
</dbReference>
<dbReference type="GO" id="GO:0005615">
    <property type="term" value="C:extracellular space"/>
    <property type="evidence" value="ECO:0000314"/>
    <property type="project" value="RGD"/>
</dbReference>
<dbReference type="GO" id="GO:0045121">
    <property type="term" value="C:membrane raft"/>
    <property type="evidence" value="ECO:0000266"/>
    <property type="project" value="RGD"/>
</dbReference>
<dbReference type="GO" id="GO:0043025">
    <property type="term" value="C:neuronal cell body"/>
    <property type="evidence" value="ECO:0000314"/>
    <property type="project" value="RGD"/>
</dbReference>
<dbReference type="GO" id="GO:0001891">
    <property type="term" value="C:phagocytic cup"/>
    <property type="evidence" value="ECO:0000266"/>
    <property type="project" value="RGD"/>
</dbReference>
<dbReference type="GO" id="GO:0005886">
    <property type="term" value="C:plasma membrane"/>
    <property type="evidence" value="ECO:0000266"/>
    <property type="project" value="RGD"/>
</dbReference>
<dbReference type="GO" id="GO:0055037">
    <property type="term" value="C:recycling endosome"/>
    <property type="evidence" value="ECO:0000266"/>
    <property type="project" value="RGD"/>
</dbReference>
<dbReference type="GO" id="GO:0005125">
    <property type="term" value="F:cytokine activity"/>
    <property type="evidence" value="ECO:0000266"/>
    <property type="project" value="RGD"/>
</dbReference>
<dbReference type="GO" id="GO:0038177">
    <property type="term" value="F:death receptor agonist activity"/>
    <property type="evidence" value="ECO:0000266"/>
    <property type="project" value="RGD"/>
</dbReference>
<dbReference type="GO" id="GO:0042802">
    <property type="term" value="F:identical protein binding"/>
    <property type="evidence" value="ECO:0000266"/>
    <property type="project" value="RGD"/>
</dbReference>
<dbReference type="GO" id="GO:0002020">
    <property type="term" value="F:protease binding"/>
    <property type="evidence" value="ECO:0000266"/>
    <property type="project" value="RGD"/>
</dbReference>
<dbReference type="GO" id="GO:0048018">
    <property type="term" value="F:receptor ligand activity"/>
    <property type="evidence" value="ECO:0000266"/>
    <property type="project" value="RGD"/>
</dbReference>
<dbReference type="GO" id="GO:0000976">
    <property type="term" value="F:transcription cis-regulatory region binding"/>
    <property type="evidence" value="ECO:0000266"/>
    <property type="project" value="RGD"/>
</dbReference>
<dbReference type="GO" id="GO:0005164">
    <property type="term" value="F:tumor necrosis factor receptor binding"/>
    <property type="evidence" value="ECO:0000314"/>
    <property type="project" value="RGD"/>
</dbReference>
<dbReference type="GO" id="GO:0009887">
    <property type="term" value="P:animal organ morphogenesis"/>
    <property type="evidence" value="ECO:0000266"/>
    <property type="project" value="RGD"/>
</dbReference>
<dbReference type="GO" id="GO:0140374">
    <property type="term" value="P:antiviral innate immune response"/>
    <property type="evidence" value="ECO:0000266"/>
    <property type="project" value="RGD"/>
</dbReference>
<dbReference type="GO" id="GO:0097190">
    <property type="term" value="P:apoptotic signaling pathway"/>
    <property type="evidence" value="ECO:0000266"/>
    <property type="project" value="RGD"/>
</dbReference>
<dbReference type="GO" id="GO:0019722">
    <property type="term" value="P:calcium-mediated signaling"/>
    <property type="evidence" value="ECO:0000314"/>
    <property type="project" value="RGD"/>
</dbReference>
<dbReference type="GO" id="GO:0007259">
    <property type="term" value="P:cell surface receptor signaling pathway via JAK-STAT"/>
    <property type="evidence" value="ECO:0000314"/>
    <property type="project" value="ARUK-UCL"/>
</dbReference>
<dbReference type="GO" id="GO:0045123">
    <property type="term" value="P:cellular extravasation"/>
    <property type="evidence" value="ECO:0000266"/>
    <property type="project" value="RGD"/>
</dbReference>
<dbReference type="GO" id="GO:0071230">
    <property type="term" value="P:cellular response to amino acid stimulus"/>
    <property type="evidence" value="ECO:0000266"/>
    <property type="project" value="RGD"/>
</dbReference>
<dbReference type="GO" id="GO:1904646">
    <property type="term" value="P:cellular response to amyloid-beta"/>
    <property type="evidence" value="ECO:0000270"/>
    <property type="project" value="RGD"/>
</dbReference>
<dbReference type="GO" id="GO:0071479">
    <property type="term" value="P:cellular response to ionizing radiation"/>
    <property type="evidence" value="ECO:0000266"/>
    <property type="project" value="RGD"/>
</dbReference>
<dbReference type="GO" id="GO:0071222">
    <property type="term" value="P:cellular response to lipopolysaccharide"/>
    <property type="evidence" value="ECO:0000315"/>
    <property type="project" value="RGD"/>
</dbReference>
<dbReference type="GO" id="GO:0071219">
    <property type="term" value="P:cellular response to molecule of bacterial origin"/>
    <property type="evidence" value="ECO:0000270"/>
    <property type="project" value="RGD"/>
</dbReference>
<dbReference type="GO" id="GO:0071316">
    <property type="term" value="P:cellular response to nicotine"/>
    <property type="evidence" value="ECO:0000266"/>
    <property type="project" value="RGD"/>
</dbReference>
<dbReference type="GO" id="GO:0071300">
    <property type="term" value="P:cellular response to retinoic acid"/>
    <property type="evidence" value="ECO:0000270"/>
    <property type="project" value="RGD"/>
</dbReference>
<dbReference type="GO" id="GO:0097237">
    <property type="term" value="P:cellular response to toxic substance"/>
    <property type="evidence" value="ECO:0000270"/>
    <property type="project" value="RGD"/>
</dbReference>
<dbReference type="GO" id="GO:0071346">
    <property type="term" value="P:cellular response to type II interferon"/>
    <property type="evidence" value="ECO:0000270"/>
    <property type="project" value="RGD"/>
</dbReference>
<dbReference type="GO" id="GO:0002439">
    <property type="term" value="P:chronic inflammatory response to antigenic stimulus"/>
    <property type="evidence" value="ECO:0000266"/>
    <property type="project" value="RGD"/>
</dbReference>
<dbReference type="GO" id="GO:0007623">
    <property type="term" value="P:circadian rhythm"/>
    <property type="evidence" value="ECO:0000270"/>
    <property type="project" value="RGD"/>
</dbReference>
<dbReference type="GO" id="GO:0006952">
    <property type="term" value="P:defense response"/>
    <property type="evidence" value="ECO:0000266"/>
    <property type="project" value="RGD"/>
</dbReference>
<dbReference type="GO" id="GO:0042742">
    <property type="term" value="P:defense response to bacterium"/>
    <property type="evidence" value="ECO:0000266"/>
    <property type="project" value="RGD"/>
</dbReference>
<dbReference type="GO" id="GO:0050830">
    <property type="term" value="P:defense response to Gram-positive bacterium"/>
    <property type="evidence" value="ECO:0000266"/>
    <property type="project" value="RGD"/>
</dbReference>
<dbReference type="GO" id="GO:0050966">
    <property type="term" value="P:detection of mechanical stimulus involved in sensory perception of pain"/>
    <property type="evidence" value="ECO:0000315"/>
    <property type="project" value="RGD"/>
</dbReference>
<dbReference type="GO" id="GO:0048566">
    <property type="term" value="P:embryonic digestive tract development"/>
    <property type="evidence" value="ECO:0000266"/>
    <property type="project" value="RGD"/>
</dbReference>
<dbReference type="GO" id="GO:0072577">
    <property type="term" value="P:endothelial cell apoptotic process"/>
    <property type="evidence" value="ECO:0000266"/>
    <property type="project" value="RGD"/>
</dbReference>
<dbReference type="GO" id="GO:0060664">
    <property type="term" value="P:epithelial cell proliferation involved in salivary gland morphogenesis"/>
    <property type="evidence" value="ECO:0000266"/>
    <property type="project" value="RGD"/>
</dbReference>
<dbReference type="GO" id="GO:0030198">
    <property type="term" value="P:extracellular matrix organization"/>
    <property type="evidence" value="ECO:0000266"/>
    <property type="project" value="RGD"/>
</dbReference>
<dbReference type="GO" id="GO:0097191">
    <property type="term" value="P:extrinsic apoptotic signaling pathway"/>
    <property type="evidence" value="ECO:0000266"/>
    <property type="project" value="RGD"/>
</dbReference>
<dbReference type="GO" id="GO:0008625">
    <property type="term" value="P:extrinsic apoptotic signaling pathway via death domain receptors"/>
    <property type="evidence" value="ECO:0000266"/>
    <property type="project" value="RGD"/>
</dbReference>
<dbReference type="GO" id="GO:0006006">
    <property type="term" value="P:glucose metabolic process"/>
    <property type="evidence" value="ECO:0000266"/>
    <property type="project" value="RGD"/>
</dbReference>
<dbReference type="GO" id="GO:0006959">
    <property type="term" value="P:humoral immune response"/>
    <property type="evidence" value="ECO:0000266"/>
    <property type="project" value="RGD"/>
</dbReference>
<dbReference type="GO" id="GO:0006955">
    <property type="term" value="P:immune response"/>
    <property type="evidence" value="ECO:0000318"/>
    <property type="project" value="GO_Central"/>
</dbReference>
<dbReference type="GO" id="GO:0006954">
    <property type="term" value="P:inflammatory response"/>
    <property type="evidence" value="ECO:0000266"/>
    <property type="project" value="RGD"/>
</dbReference>
<dbReference type="GO" id="GO:0090594">
    <property type="term" value="P:inflammatory response to wounding"/>
    <property type="evidence" value="ECO:0000266"/>
    <property type="project" value="RGD"/>
</dbReference>
<dbReference type="GO" id="GO:0008630">
    <property type="term" value="P:intrinsic apoptotic signaling pathway in response to DNA damage"/>
    <property type="evidence" value="ECO:0000266"/>
    <property type="project" value="RGD"/>
</dbReference>
<dbReference type="GO" id="GO:0007254">
    <property type="term" value="P:JNK cascade"/>
    <property type="evidence" value="ECO:0000266"/>
    <property type="project" value="RGD"/>
</dbReference>
<dbReference type="GO" id="GO:0050900">
    <property type="term" value="P:leukocyte migration"/>
    <property type="evidence" value="ECO:0000266"/>
    <property type="project" value="RGD"/>
</dbReference>
<dbReference type="GO" id="GO:0050901">
    <property type="term" value="P:leukocyte tethering or rolling"/>
    <property type="evidence" value="ECO:0000266"/>
    <property type="project" value="RGD"/>
</dbReference>
<dbReference type="GO" id="GO:0097421">
    <property type="term" value="P:liver regeneration"/>
    <property type="evidence" value="ECO:0000270"/>
    <property type="project" value="RGD"/>
</dbReference>
<dbReference type="GO" id="GO:0002281">
    <property type="term" value="P:macrophage activation involved in immune response"/>
    <property type="evidence" value="ECO:0000266"/>
    <property type="project" value="RGD"/>
</dbReference>
<dbReference type="GO" id="GO:0001774">
    <property type="term" value="P:microglial cell activation"/>
    <property type="evidence" value="ECO:0000266"/>
    <property type="project" value="RGD"/>
</dbReference>
<dbReference type="GO" id="GO:0097527">
    <property type="term" value="P:necroptotic signaling pathway"/>
    <property type="evidence" value="ECO:0000250"/>
    <property type="project" value="UniProtKB"/>
</dbReference>
<dbReference type="GO" id="GO:1900222">
    <property type="term" value="P:negative regulation of amyloid-beta clearance"/>
    <property type="evidence" value="ECO:0000266"/>
    <property type="project" value="RGD"/>
</dbReference>
<dbReference type="GO" id="GO:0043066">
    <property type="term" value="P:negative regulation of apoptotic process"/>
    <property type="evidence" value="ECO:0000314"/>
    <property type="project" value="RGD"/>
</dbReference>
<dbReference type="GO" id="GO:2001234">
    <property type="term" value="P:negative regulation of apoptotic signaling pathway"/>
    <property type="evidence" value="ECO:0000266"/>
    <property type="project" value="RGD"/>
</dbReference>
<dbReference type="GO" id="GO:1903347">
    <property type="term" value="P:negative regulation of bicellular tight junction assembly"/>
    <property type="evidence" value="ECO:0000266"/>
    <property type="project" value="RGD"/>
</dbReference>
<dbReference type="GO" id="GO:0120190">
    <property type="term" value="P:negative regulation of bile acid secretion"/>
    <property type="evidence" value="ECO:0000314"/>
    <property type="project" value="RGD"/>
</dbReference>
<dbReference type="GO" id="GO:0043537">
    <property type="term" value="P:negative regulation of blood vessel endothelial cell migration"/>
    <property type="evidence" value="ECO:0000266"/>
    <property type="project" value="RGD"/>
</dbReference>
<dbReference type="GO" id="GO:0061048">
    <property type="term" value="P:negative regulation of branching involved in lung morphogenesis"/>
    <property type="evidence" value="ECO:0000266"/>
    <property type="project" value="RGD"/>
</dbReference>
<dbReference type="GO" id="GO:0008285">
    <property type="term" value="P:negative regulation of cell population proliferation"/>
    <property type="evidence" value="ECO:0000314"/>
    <property type="project" value="RGD"/>
</dbReference>
<dbReference type="GO" id="GO:0002719">
    <property type="term" value="P:negative regulation of cytokine production involved in immune response"/>
    <property type="evidence" value="ECO:0000266"/>
    <property type="project" value="RGD"/>
</dbReference>
<dbReference type="GO" id="GO:0046325">
    <property type="term" value="P:negative regulation of D-glucose import"/>
    <property type="evidence" value="ECO:0000314"/>
    <property type="project" value="RGD"/>
</dbReference>
<dbReference type="GO" id="GO:0045892">
    <property type="term" value="P:negative regulation of DNA-templated transcription"/>
    <property type="evidence" value="ECO:0000266"/>
    <property type="project" value="RGD"/>
</dbReference>
<dbReference type="GO" id="GO:0001937">
    <property type="term" value="P:negative regulation of endothelial cell proliferation"/>
    <property type="evidence" value="ECO:0000266"/>
    <property type="project" value="RGD"/>
</dbReference>
<dbReference type="GO" id="GO:2001240">
    <property type="term" value="P:negative regulation of extrinsic apoptotic signaling pathway in absence of ligand"/>
    <property type="evidence" value="ECO:0000266"/>
    <property type="project" value="RGD"/>
</dbReference>
<dbReference type="GO" id="GO:0045599">
    <property type="term" value="P:negative regulation of fat cell differentiation"/>
    <property type="evidence" value="ECO:0000314"/>
    <property type="project" value="RGD"/>
</dbReference>
<dbReference type="GO" id="GO:0010629">
    <property type="term" value="P:negative regulation of gene expression"/>
    <property type="evidence" value="ECO:0000266"/>
    <property type="project" value="RGD"/>
</dbReference>
<dbReference type="GO" id="GO:0010459">
    <property type="term" value="P:negative regulation of heart rate"/>
    <property type="evidence" value="ECO:0000315"/>
    <property type="project" value="RGD"/>
</dbReference>
<dbReference type="GO" id="GO:0032715">
    <property type="term" value="P:negative regulation of interleukin-6 production"/>
    <property type="evidence" value="ECO:0000266"/>
    <property type="project" value="RGD"/>
</dbReference>
<dbReference type="GO" id="GO:0002037">
    <property type="term" value="P:negative regulation of L-glutamate import across plasma membrane"/>
    <property type="evidence" value="ECO:0000314"/>
    <property type="project" value="RGD"/>
</dbReference>
<dbReference type="GO" id="GO:0050995">
    <property type="term" value="P:negative regulation of lipid catabolic process"/>
    <property type="evidence" value="ECO:0000266"/>
    <property type="project" value="RGD"/>
</dbReference>
<dbReference type="GO" id="GO:0045930">
    <property type="term" value="P:negative regulation of mitotic cell cycle"/>
    <property type="evidence" value="ECO:0000266"/>
    <property type="project" value="RGD"/>
</dbReference>
<dbReference type="GO" id="GO:0031642">
    <property type="term" value="P:negative regulation of myelination"/>
    <property type="evidence" value="ECO:0000315"/>
    <property type="project" value="RGD"/>
</dbReference>
<dbReference type="GO" id="GO:0045662">
    <property type="term" value="P:negative regulation of myoblast differentiation"/>
    <property type="evidence" value="ECO:0000266"/>
    <property type="project" value="RGD"/>
</dbReference>
<dbReference type="GO" id="GO:0045668">
    <property type="term" value="P:negative regulation of osteoblast differentiation"/>
    <property type="evidence" value="ECO:0000266"/>
    <property type="project" value="RGD"/>
</dbReference>
<dbReference type="GO" id="GO:0090324">
    <property type="term" value="P:negative regulation of oxidative phosphorylation"/>
    <property type="evidence" value="ECO:0000314"/>
    <property type="project" value="RGD"/>
</dbReference>
<dbReference type="GO" id="GO:0043242">
    <property type="term" value="P:negative regulation of protein-containing complex disassembly"/>
    <property type="evidence" value="ECO:0000266"/>
    <property type="project" value="RGD"/>
</dbReference>
<dbReference type="GO" id="GO:0003085">
    <property type="term" value="P:negative regulation of systemic arterial blood pressure"/>
    <property type="evidence" value="ECO:0000315"/>
    <property type="project" value="RGD"/>
</dbReference>
<dbReference type="GO" id="GO:0000122">
    <property type="term" value="P:negative regulation of transcription by RNA polymerase II"/>
    <property type="evidence" value="ECO:0000266"/>
    <property type="project" value="RGD"/>
</dbReference>
<dbReference type="GO" id="GO:0061044">
    <property type="term" value="P:negative regulation of vascular wound healing"/>
    <property type="evidence" value="ECO:0000266"/>
    <property type="project" value="RGD"/>
</dbReference>
<dbReference type="GO" id="GO:0045071">
    <property type="term" value="P:negative regulation of viral genome replication"/>
    <property type="evidence" value="ECO:0000266"/>
    <property type="project" value="RGD"/>
</dbReference>
<dbReference type="GO" id="GO:0030316">
    <property type="term" value="P:osteoclast differentiation"/>
    <property type="evidence" value="ECO:0000266"/>
    <property type="project" value="RGD"/>
</dbReference>
<dbReference type="GO" id="GO:0043491">
    <property type="term" value="P:phosphatidylinositol 3-kinase/protein kinase B signal transduction"/>
    <property type="evidence" value="ECO:0000266"/>
    <property type="project" value="RGD"/>
</dbReference>
<dbReference type="GO" id="GO:0045760">
    <property type="term" value="P:positive regulation of action potential"/>
    <property type="evidence" value="ECO:0000314"/>
    <property type="project" value="RGD"/>
</dbReference>
<dbReference type="GO" id="GO:0034250">
    <property type="term" value="P:positive regulation of amide metabolic process"/>
    <property type="evidence" value="ECO:0000266"/>
    <property type="project" value="RGD"/>
</dbReference>
<dbReference type="GO" id="GO:1902004">
    <property type="term" value="P:positive regulation of amyloid-beta formation"/>
    <property type="evidence" value="ECO:0000266"/>
    <property type="project" value="RGD"/>
</dbReference>
<dbReference type="GO" id="GO:0043065">
    <property type="term" value="P:positive regulation of apoptotic process"/>
    <property type="evidence" value="ECO:0000315"/>
    <property type="project" value="RGD"/>
</dbReference>
<dbReference type="GO" id="GO:2000334">
    <property type="term" value="P:positive regulation of blood microparticle formation"/>
    <property type="evidence" value="ECO:0000266"/>
    <property type="project" value="RGD"/>
</dbReference>
<dbReference type="GO" id="GO:0070886">
    <property type="term" value="P:positive regulation of calcineurin-NFAT signaling cascade"/>
    <property type="evidence" value="ECO:0000266"/>
    <property type="project" value="RGD"/>
</dbReference>
<dbReference type="GO" id="GO:0043123">
    <property type="term" value="P:positive regulation of canonical NF-kappaB signal transduction"/>
    <property type="evidence" value="ECO:0000314"/>
    <property type="project" value="ARUK-UCL"/>
</dbReference>
<dbReference type="GO" id="GO:0045785">
    <property type="term" value="P:positive regulation of cell adhesion"/>
    <property type="evidence" value="ECO:0000266"/>
    <property type="project" value="RGD"/>
</dbReference>
<dbReference type="GO" id="GO:2000343">
    <property type="term" value="P:positive regulation of chemokine (C-X-C motif) ligand 2 production"/>
    <property type="evidence" value="ECO:0000266"/>
    <property type="project" value="RGD"/>
</dbReference>
<dbReference type="GO" id="GO:0032722">
    <property type="term" value="P:positive regulation of chemokine production"/>
    <property type="evidence" value="ECO:0000266"/>
    <property type="project" value="RGD"/>
</dbReference>
<dbReference type="GO" id="GO:0002876">
    <property type="term" value="P:positive regulation of chronic inflammatory response to antigenic stimulus"/>
    <property type="evidence" value="ECO:0000266"/>
    <property type="project" value="RGD"/>
</dbReference>
<dbReference type="GO" id="GO:0001819">
    <property type="term" value="P:positive regulation of cytokine production"/>
    <property type="evidence" value="ECO:0000266"/>
    <property type="project" value="RGD"/>
</dbReference>
<dbReference type="GO" id="GO:1900017">
    <property type="term" value="P:positive regulation of cytokine production involved in inflammatory response"/>
    <property type="evidence" value="ECO:0000266"/>
    <property type="project" value="RGD"/>
</dbReference>
<dbReference type="GO" id="GO:2000573">
    <property type="term" value="P:positive regulation of DNA biosynthetic process"/>
    <property type="evidence" value="ECO:0000314"/>
    <property type="project" value="RGD"/>
</dbReference>
<dbReference type="GO" id="GO:0045893">
    <property type="term" value="P:positive regulation of DNA-templated transcription"/>
    <property type="evidence" value="ECO:0000266"/>
    <property type="project" value="RGD"/>
</dbReference>
<dbReference type="GO" id="GO:2000353">
    <property type="term" value="P:positive regulation of endothelial cell apoptotic process"/>
    <property type="evidence" value="ECO:0000266"/>
    <property type="project" value="RGD"/>
</dbReference>
<dbReference type="GO" id="GO:2000866">
    <property type="term" value="P:positive regulation of estradiol secretion"/>
    <property type="evidence" value="ECO:0000266"/>
    <property type="project" value="RGD"/>
</dbReference>
<dbReference type="GO" id="GO:2001238">
    <property type="term" value="P:positive regulation of extrinsic apoptotic signaling pathway"/>
    <property type="evidence" value="ECO:0000315"/>
    <property type="project" value="RGD"/>
</dbReference>
<dbReference type="GO" id="GO:0031622">
    <property type="term" value="P:positive regulation of fever generation"/>
    <property type="evidence" value="ECO:0000266"/>
    <property type="project" value="RGD"/>
</dbReference>
<dbReference type="GO" id="GO:0032724">
    <property type="term" value="P:positive regulation of fractalkine production"/>
    <property type="evidence" value="ECO:0000314"/>
    <property type="project" value="ARUK-UCL"/>
</dbReference>
<dbReference type="GO" id="GO:0010628">
    <property type="term" value="P:positive regulation of gene expression"/>
    <property type="evidence" value="ECO:0000314"/>
    <property type="project" value="UniProtKB"/>
</dbReference>
<dbReference type="GO" id="GO:0060252">
    <property type="term" value="P:positive regulation of glial cell proliferation"/>
    <property type="evidence" value="ECO:0000266"/>
    <property type="project" value="RGD"/>
</dbReference>
<dbReference type="GO" id="GO:0051798">
    <property type="term" value="P:positive regulation of hair follicle development"/>
    <property type="evidence" value="ECO:0000266"/>
    <property type="project" value="RGD"/>
</dbReference>
<dbReference type="GO" id="GO:2000347">
    <property type="term" value="P:positive regulation of hepatocyte proliferation"/>
    <property type="evidence" value="ECO:0000314"/>
    <property type="project" value="RGD"/>
</dbReference>
<dbReference type="GO" id="GO:0034116">
    <property type="term" value="P:positive regulation of heterotypic cell-cell adhesion"/>
    <property type="evidence" value="ECO:0000266"/>
    <property type="project" value="RGD"/>
</dbReference>
<dbReference type="GO" id="GO:0002925">
    <property type="term" value="P:positive regulation of humoral immune response mediated by circulating immunoglobulin"/>
    <property type="evidence" value="ECO:0000266"/>
    <property type="project" value="RGD"/>
</dbReference>
<dbReference type="GO" id="GO:0002639">
    <property type="term" value="P:positive regulation of immunoglobulin production"/>
    <property type="evidence" value="ECO:0000315"/>
    <property type="project" value="RGD"/>
</dbReference>
<dbReference type="GO" id="GO:0032731">
    <property type="term" value="P:positive regulation of interleukin-1 beta production"/>
    <property type="evidence" value="ECO:0000266"/>
    <property type="project" value="RGD"/>
</dbReference>
<dbReference type="GO" id="GO:0032741">
    <property type="term" value="P:positive regulation of interleukin-18 production"/>
    <property type="evidence" value="ECO:0000315"/>
    <property type="project" value="RGD"/>
</dbReference>
<dbReference type="GO" id="GO:0150129">
    <property type="term" value="P:positive regulation of interleukin-33 production"/>
    <property type="evidence" value="ECO:0000266"/>
    <property type="project" value="RGD"/>
</dbReference>
<dbReference type="GO" id="GO:0032755">
    <property type="term" value="P:positive regulation of interleukin-6 production"/>
    <property type="evidence" value="ECO:0000314"/>
    <property type="project" value="ARUK-UCL"/>
</dbReference>
<dbReference type="GO" id="GO:0032757">
    <property type="term" value="P:positive regulation of interleukin-8 production"/>
    <property type="evidence" value="ECO:0000266"/>
    <property type="project" value="RGD"/>
</dbReference>
<dbReference type="GO" id="GO:0046330">
    <property type="term" value="P:positive regulation of JNK cascade"/>
    <property type="evidence" value="ECO:0000266"/>
    <property type="project" value="RGD"/>
</dbReference>
<dbReference type="GO" id="GO:1904999">
    <property type="term" value="P:positive regulation of leukocyte adhesion to arterial endothelial cell"/>
    <property type="evidence" value="ECO:0000266"/>
    <property type="project" value="RGD"/>
</dbReference>
<dbReference type="GO" id="GO:1904996">
    <property type="term" value="P:positive regulation of leukocyte adhesion to vascular endothelial cell"/>
    <property type="evidence" value="ECO:0000266"/>
    <property type="project" value="RGD"/>
</dbReference>
<dbReference type="GO" id="GO:0045834">
    <property type="term" value="P:positive regulation of lipid metabolic process"/>
    <property type="evidence" value="ECO:0000266"/>
    <property type="project" value="RGD"/>
</dbReference>
<dbReference type="GO" id="GO:0010744">
    <property type="term" value="P:positive regulation of macrophage derived foam cell differentiation"/>
    <property type="evidence" value="ECO:0000266"/>
    <property type="project" value="RGD"/>
</dbReference>
<dbReference type="GO" id="GO:0043410">
    <property type="term" value="P:positive regulation of MAPK cascade"/>
    <property type="evidence" value="ECO:0000266"/>
    <property type="project" value="RGD"/>
</dbReference>
<dbReference type="GO" id="GO:0051044">
    <property type="term" value="P:positive regulation of membrane protein ectodomain proteolysis"/>
    <property type="evidence" value="ECO:0000266"/>
    <property type="project" value="RGD"/>
</dbReference>
<dbReference type="GO" id="GO:1902895">
    <property type="term" value="P:positive regulation of miRNA transcription"/>
    <property type="evidence" value="ECO:0000266"/>
    <property type="project" value="RGD"/>
</dbReference>
<dbReference type="GO" id="GO:0045840">
    <property type="term" value="P:positive regulation of mitotic nuclear division"/>
    <property type="evidence" value="ECO:0000315"/>
    <property type="project" value="RGD"/>
</dbReference>
<dbReference type="GO" id="GO:0043525">
    <property type="term" value="P:positive regulation of neuron apoptotic process"/>
    <property type="evidence" value="ECO:0000315"/>
    <property type="project" value="RGD"/>
</dbReference>
<dbReference type="GO" id="GO:1902565">
    <property type="term" value="P:positive regulation of neutrophil activation"/>
    <property type="evidence" value="ECO:0000315"/>
    <property type="project" value="RGD"/>
</dbReference>
<dbReference type="GO" id="GO:0051092">
    <property type="term" value="P:positive regulation of NF-kappaB transcription factor activity"/>
    <property type="evidence" value="ECO:0000250"/>
    <property type="project" value="UniProtKB"/>
</dbReference>
<dbReference type="GO" id="GO:0045429">
    <property type="term" value="P:positive regulation of nitric oxide biosynthetic process"/>
    <property type="evidence" value="ECO:0000266"/>
    <property type="project" value="RGD"/>
</dbReference>
<dbReference type="GO" id="GO:1901224">
    <property type="term" value="P:positive regulation of non-canonical NF-kappaB signal transduction"/>
    <property type="evidence" value="ECO:0000266"/>
    <property type="project" value="RGD"/>
</dbReference>
<dbReference type="GO" id="GO:0045672">
    <property type="term" value="P:positive regulation of osteoclast differentiation"/>
    <property type="evidence" value="ECO:0000266"/>
    <property type="project" value="RGD"/>
</dbReference>
<dbReference type="GO" id="GO:0051897">
    <property type="term" value="P:positive regulation of phosphatidylinositol 3-kinase/protein kinase B signal transduction"/>
    <property type="evidence" value="ECO:0000315"/>
    <property type="project" value="ARUK-UCL"/>
</dbReference>
<dbReference type="GO" id="GO:0071803">
    <property type="term" value="P:positive regulation of podosome assembly"/>
    <property type="evidence" value="ECO:0000266"/>
    <property type="project" value="RGD"/>
</dbReference>
<dbReference type="GO" id="GO:0043068">
    <property type="term" value="P:positive regulation of programmed cell death"/>
    <property type="evidence" value="ECO:0000266"/>
    <property type="project" value="RGD"/>
</dbReference>
<dbReference type="GO" id="GO:0045732">
    <property type="term" value="P:positive regulation of protein catabolic process"/>
    <property type="evidence" value="ECO:0000266"/>
    <property type="project" value="RGD"/>
</dbReference>
<dbReference type="GO" id="GO:2000010">
    <property type="term" value="P:positive regulation of protein localization to cell surface"/>
    <property type="evidence" value="ECO:0000266"/>
    <property type="project" value="RGD"/>
</dbReference>
<dbReference type="GO" id="GO:1903078">
    <property type="term" value="P:positive regulation of protein localization to plasma membrane"/>
    <property type="evidence" value="ECO:0000315"/>
    <property type="project" value="ARUK-UCL"/>
</dbReference>
<dbReference type="GO" id="GO:0051222">
    <property type="term" value="P:positive regulation of protein transport"/>
    <property type="evidence" value="ECO:0000314"/>
    <property type="project" value="RGD"/>
</dbReference>
<dbReference type="GO" id="GO:0031334">
    <property type="term" value="P:positive regulation of protein-containing complex assembly"/>
    <property type="evidence" value="ECO:0000266"/>
    <property type="project" value="RGD"/>
</dbReference>
<dbReference type="GO" id="GO:0043243">
    <property type="term" value="P:positive regulation of protein-containing complex disassembly"/>
    <property type="evidence" value="ECO:0000266"/>
    <property type="project" value="RGD"/>
</dbReference>
<dbReference type="GO" id="GO:0048661">
    <property type="term" value="P:positive regulation of smooth muscle cell proliferation"/>
    <property type="evidence" value="ECO:0000266"/>
    <property type="project" value="RGD"/>
</dbReference>
<dbReference type="GO" id="GO:0050806">
    <property type="term" value="P:positive regulation of synaptic transmission"/>
    <property type="evidence" value="ECO:0000315"/>
    <property type="project" value="RGD"/>
</dbReference>
<dbReference type="GO" id="GO:1901647">
    <property type="term" value="P:positive regulation of synoviocyte proliferation"/>
    <property type="evidence" value="ECO:0000266"/>
    <property type="project" value="RGD"/>
</dbReference>
<dbReference type="GO" id="GO:0045944">
    <property type="term" value="P:positive regulation of transcription by RNA polymerase II"/>
    <property type="evidence" value="ECO:0000314"/>
    <property type="project" value="ARUK-UCL"/>
</dbReference>
<dbReference type="GO" id="GO:0045994">
    <property type="term" value="P:positive regulation of translational initiation by iron"/>
    <property type="evidence" value="ECO:0000266"/>
    <property type="project" value="RGD"/>
</dbReference>
<dbReference type="GO" id="GO:0032729">
    <property type="term" value="P:positive regulation of type II interferon production"/>
    <property type="evidence" value="ECO:0000266"/>
    <property type="project" value="RGD"/>
</dbReference>
<dbReference type="GO" id="GO:1904707">
    <property type="term" value="P:positive regulation of vascular associated smooth muscle cell proliferation"/>
    <property type="evidence" value="ECO:0000266"/>
    <property type="project" value="RGD"/>
</dbReference>
<dbReference type="GO" id="GO:0060557">
    <property type="term" value="P:positive regulation of vitamin D biosynthetic process"/>
    <property type="evidence" value="ECO:0000266"/>
    <property type="project" value="RGD"/>
</dbReference>
<dbReference type="GO" id="GO:0072659">
    <property type="term" value="P:protein localization to plasma membrane"/>
    <property type="evidence" value="ECO:0000266"/>
    <property type="project" value="RGD"/>
</dbReference>
<dbReference type="GO" id="GO:0060693">
    <property type="term" value="P:regulation of branching involved in salivary gland morphogenesis"/>
    <property type="evidence" value="ECO:0000266"/>
    <property type="project" value="RGD"/>
</dbReference>
<dbReference type="GO" id="GO:0043122">
    <property type="term" value="P:regulation of canonical NF-kappaB signal transduction"/>
    <property type="evidence" value="ECO:0000266"/>
    <property type="project" value="RGD"/>
</dbReference>
<dbReference type="GO" id="GO:0042127">
    <property type="term" value="P:regulation of cell population proliferation"/>
    <property type="evidence" value="ECO:0000314"/>
    <property type="project" value="RGD"/>
</dbReference>
<dbReference type="GO" id="GO:2000351">
    <property type="term" value="P:regulation of endothelial cell apoptotic process"/>
    <property type="evidence" value="ECO:0000266"/>
    <property type="project" value="RGD"/>
</dbReference>
<dbReference type="GO" id="GO:1903140">
    <property type="term" value="P:regulation of establishment of endothelial barrier"/>
    <property type="evidence" value="ECO:0000266"/>
    <property type="project" value="RGD"/>
</dbReference>
<dbReference type="GO" id="GO:0045598">
    <property type="term" value="P:regulation of fat cell differentiation"/>
    <property type="evidence" value="ECO:0000266"/>
    <property type="project" value="RGD"/>
</dbReference>
<dbReference type="GO" id="GO:0002637">
    <property type="term" value="P:regulation of immunoglobulin production"/>
    <property type="evidence" value="ECO:0000266"/>
    <property type="project" value="RGD"/>
</dbReference>
<dbReference type="GO" id="GO:0050727">
    <property type="term" value="P:regulation of inflammatory response"/>
    <property type="evidence" value="ECO:0000266"/>
    <property type="project" value="RGD"/>
</dbReference>
<dbReference type="GO" id="GO:0050796">
    <property type="term" value="P:regulation of insulin secretion"/>
    <property type="evidence" value="ECO:0000266"/>
    <property type="project" value="RGD"/>
</dbReference>
<dbReference type="GO" id="GO:1905038">
    <property type="term" value="P:regulation of membrane lipid metabolic process"/>
    <property type="evidence" value="ECO:0000266"/>
    <property type="project" value="RGD"/>
</dbReference>
<dbReference type="GO" id="GO:0019222">
    <property type="term" value="P:regulation of metabolic process"/>
    <property type="evidence" value="ECO:0000266"/>
    <property type="project" value="RGD"/>
</dbReference>
<dbReference type="GO" id="GO:0045670">
    <property type="term" value="P:regulation of osteoclast differentiation"/>
    <property type="evidence" value="ECO:0000266"/>
    <property type="project" value="RGD"/>
</dbReference>
<dbReference type="GO" id="GO:0050708">
    <property type="term" value="P:regulation of protein secretion"/>
    <property type="evidence" value="ECO:0000266"/>
    <property type="project" value="RGD"/>
</dbReference>
<dbReference type="GO" id="GO:2000377">
    <property type="term" value="P:regulation of reactive oxygen species metabolic process"/>
    <property type="evidence" value="ECO:0000266"/>
    <property type="project" value="RGD"/>
</dbReference>
<dbReference type="GO" id="GO:0050807">
    <property type="term" value="P:regulation of synapse organization"/>
    <property type="evidence" value="ECO:0000266"/>
    <property type="project" value="RGD"/>
</dbReference>
<dbReference type="GO" id="GO:1905242">
    <property type="term" value="P:response to 3,3',5-triiodo-L-thyronine"/>
    <property type="evidence" value="ECO:0000270"/>
    <property type="project" value="RGD"/>
</dbReference>
<dbReference type="GO" id="GO:0014823">
    <property type="term" value="P:response to activity"/>
    <property type="evidence" value="ECO:0000270"/>
    <property type="project" value="RGD"/>
</dbReference>
<dbReference type="GO" id="GO:0009617">
    <property type="term" value="P:response to bacterium"/>
    <property type="evidence" value="ECO:0000270"/>
    <property type="project" value="RGD"/>
</dbReference>
<dbReference type="GO" id="GO:0045471">
    <property type="term" value="P:response to ethanol"/>
    <property type="evidence" value="ECO:0000270"/>
    <property type="project" value="RGD"/>
</dbReference>
<dbReference type="GO" id="GO:0009750">
    <property type="term" value="P:response to fructose"/>
    <property type="evidence" value="ECO:0000270"/>
    <property type="project" value="RGD"/>
</dbReference>
<dbReference type="GO" id="GO:0051384">
    <property type="term" value="P:response to glucocorticoid"/>
    <property type="evidence" value="ECO:0000266"/>
    <property type="project" value="RGD"/>
</dbReference>
<dbReference type="GO" id="GO:1990268">
    <property type="term" value="P:response to gold nanoparticle"/>
    <property type="evidence" value="ECO:0000270"/>
    <property type="project" value="RGD"/>
</dbReference>
<dbReference type="GO" id="GO:0140460">
    <property type="term" value="P:response to Gram-negative bacterium"/>
    <property type="evidence" value="ECO:0000270"/>
    <property type="project" value="RGD"/>
</dbReference>
<dbReference type="GO" id="GO:0001666">
    <property type="term" value="P:response to hypoxia"/>
    <property type="evidence" value="ECO:0000270"/>
    <property type="project" value="RGD"/>
</dbReference>
<dbReference type="GO" id="GO:0035900">
    <property type="term" value="P:response to isolation stress"/>
    <property type="evidence" value="ECO:0000270"/>
    <property type="project" value="RGD"/>
</dbReference>
<dbReference type="GO" id="GO:1902065">
    <property type="term" value="P:response to L-glutamate"/>
    <property type="evidence" value="ECO:0000314"/>
    <property type="project" value="RGD"/>
</dbReference>
<dbReference type="GO" id="GO:0032496">
    <property type="term" value="P:response to lipopolysaccharide"/>
    <property type="evidence" value="ECO:0000315"/>
    <property type="project" value="UniProtKB"/>
</dbReference>
<dbReference type="GO" id="GO:0036005">
    <property type="term" value="P:response to macrophage colony-stimulating factor"/>
    <property type="evidence" value="ECO:0000270"/>
    <property type="project" value="RGD"/>
</dbReference>
<dbReference type="GO" id="GO:0009612">
    <property type="term" value="P:response to mechanical stimulus"/>
    <property type="evidence" value="ECO:0000270"/>
    <property type="project" value="RGD"/>
</dbReference>
<dbReference type="GO" id="GO:0031667">
    <property type="term" value="P:response to nutrient levels"/>
    <property type="evidence" value="ECO:0000270"/>
    <property type="project" value="RGD"/>
</dbReference>
<dbReference type="GO" id="GO:0009615">
    <property type="term" value="P:response to virus"/>
    <property type="evidence" value="ECO:0000266"/>
    <property type="project" value="RGD"/>
</dbReference>
<dbReference type="GO" id="GO:0009410">
    <property type="term" value="P:response to xenobiotic stimulus"/>
    <property type="evidence" value="ECO:0000270"/>
    <property type="project" value="RGD"/>
</dbReference>
<dbReference type="GO" id="GO:0003009">
    <property type="term" value="P:skeletal muscle contraction"/>
    <property type="evidence" value="ECO:0000270"/>
    <property type="project" value="RGD"/>
</dbReference>
<dbReference type="GO" id="GO:0034138">
    <property type="term" value="P:toll-like receptor 3 signaling pathway"/>
    <property type="evidence" value="ECO:0000315"/>
    <property type="project" value="UniProtKB"/>
</dbReference>
<dbReference type="GO" id="GO:0033209">
    <property type="term" value="P:tumor necrosis factor-mediated signaling pathway"/>
    <property type="evidence" value="ECO:0000315"/>
    <property type="project" value="ARUK-UCL"/>
</dbReference>
<dbReference type="GO" id="GO:0010573">
    <property type="term" value="P:vascular endothelial growth factor production"/>
    <property type="evidence" value="ECO:0000250"/>
    <property type="project" value="UniProtKB"/>
</dbReference>
<dbReference type="GO" id="GO:0042311">
    <property type="term" value="P:vasodilation"/>
    <property type="evidence" value="ECO:0000315"/>
    <property type="project" value="RGD"/>
</dbReference>
<dbReference type="CDD" id="cd00184">
    <property type="entry name" value="TNF"/>
    <property type="match status" value="1"/>
</dbReference>
<dbReference type="FunFam" id="2.60.120.40:FF:000007">
    <property type="entry name" value="Tumor necrosis factor"/>
    <property type="match status" value="1"/>
</dbReference>
<dbReference type="Gene3D" id="2.60.120.40">
    <property type="match status" value="1"/>
</dbReference>
<dbReference type="InterPro" id="IPR006053">
    <property type="entry name" value="TNF"/>
</dbReference>
<dbReference type="InterPro" id="IPR002959">
    <property type="entry name" value="TNF_alpha"/>
</dbReference>
<dbReference type="InterPro" id="IPR021184">
    <property type="entry name" value="TNF_CS"/>
</dbReference>
<dbReference type="InterPro" id="IPR006052">
    <property type="entry name" value="TNF_dom"/>
</dbReference>
<dbReference type="InterPro" id="IPR008983">
    <property type="entry name" value="Tumour_necrosis_fac-like_dom"/>
</dbReference>
<dbReference type="PANTHER" id="PTHR11471:SF23">
    <property type="entry name" value="TUMOR NECROSIS FACTOR"/>
    <property type="match status" value="1"/>
</dbReference>
<dbReference type="PANTHER" id="PTHR11471">
    <property type="entry name" value="TUMOR NECROSIS FACTOR FAMILY MEMBER"/>
    <property type="match status" value="1"/>
</dbReference>
<dbReference type="Pfam" id="PF00229">
    <property type="entry name" value="TNF"/>
    <property type="match status" value="1"/>
</dbReference>
<dbReference type="PRINTS" id="PR01234">
    <property type="entry name" value="TNECROSISFCT"/>
</dbReference>
<dbReference type="PRINTS" id="PR01235">
    <property type="entry name" value="TNFALPHA"/>
</dbReference>
<dbReference type="SMART" id="SM00207">
    <property type="entry name" value="TNF"/>
    <property type="match status" value="1"/>
</dbReference>
<dbReference type="SUPFAM" id="SSF49842">
    <property type="entry name" value="TNF-like"/>
    <property type="match status" value="1"/>
</dbReference>
<dbReference type="PROSITE" id="PS00251">
    <property type="entry name" value="THD_1"/>
    <property type="match status" value="1"/>
</dbReference>
<dbReference type="PROSITE" id="PS50049">
    <property type="entry name" value="THD_2"/>
    <property type="match status" value="1"/>
</dbReference>
<name>TNFA_RAT</name>
<keyword id="KW-1003">Cell membrane</keyword>
<keyword id="KW-0202">Cytokine</keyword>
<keyword id="KW-1015">Disulfide bond</keyword>
<keyword id="KW-0325">Glycoprotein</keyword>
<keyword id="KW-0449">Lipoprotein</keyword>
<keyword id="KW-0472">Membrane</keyword>
<keyword id="KW-0519">Myristate</keyword>
<keyword id="KW-0597">Phosphoprotein</keyword>
<keyword id="KW-1185">Reference proteome</keyword>
<keyword id="KW-0964">Secreted</keyword>
<keyword id="KW-0735">Signal-anchor</keyword>
<keyword id="KW-0812">Transmembrane</keyword>
<keyword id="KW-1133">Transmembrane helix</keyword>
<feature type="chain" id="PRO_0000034451" description="Tumor necrosis factor, membrane form">
    <location>
        <begin position="1"/>
        <end position="235"/>
    </location>
</feature>
<feature type="chain" id="PRO_0000417287" description="Intracellular domain 1" evidence="1">
    <location>
        <begin position="1"/>
        <end position="39"/>
    </location>
</feature>
<feature type="chain" id="PRO_0000417288" description="Intracellular domain 2" evidence="1">
    <location>
        <begin position="1"/>
        <end position="35"/>
    </location>
</feature>
<feature type="chain" id="PRO_0000417289" description="C-domain 1" evidence="1">
    <location>
        <begin position="50"/>
        <end status="unknown"/>
    </location>
</feature>
<feature type="chain" id="PRO_0000417290" description="C-domain 2" evidence="1">
    <location>
        <begin position="52"/>
        <end status="unknown"/>
    </location>
</feature>
<feature type="chain" id="PRO_0000034452" description="Tumor necrosis factor, soluble form">
    <location>
        <begin position="80"/>
        <end position="235"/>
    </location>
</feature>
<feature type="topological domain" description="Cytoplasmic" evidence="4">
    <location>
        <begin position="1"/>
        <end position="35"/>
    </location>
</feature>
<feature type="transmembrane region" description="Helical; Signal-anchor for type II membrane protein" evidence="4">
    <location>
        <begin position="36"/>
        <end position="56"/>
    </location>
</feature>
<feature type="topological domain" description="Extracellular" evidence="4">
    <location>
        <begin position="57"/>
        <end position="235"/>
    </location>
</feature>
<feature type="domain" description="THD" evidence="5">
    <location>
        <begin position="91"/>
        <end position="235"/>
    </location>
</feature>
<feature type="site" description="Cleavage; by SPPL2A or SPPL2B" evidence="1">
    <location>
        <begin position="34"/>
        <end position="35"/>
    </location>
</feature>
<feature type="site" description="Cleavage; by SPPL2A or SPPL2B" evidence="1">
    <location>
        <begin position="39"/>
        <end position="40"/>
    </location>
</feature>
<feature type="site" description="Cleavage; by SPPL2A or SPPL2B" evidence="1">
    <location>
        <begin position="49"/>
        <end position="50"/>
    </location>
</feature>
<feature type="site" description="Cleavage; by SPPL2A or SPPL2B" evidence="1">
    <location>
        <begin position="51"/>
        <end position="52"/>
    </location>
</feature>
<feature type="site" description="Cleavage; by ADAM17" evidence="1">
    <location>
        <begin position="79"/>
        <end position="80"/>
    </location>
</feature>
<feature type="modified residue" description="Phosphoserine; by CK1" evidence="1">
    <location>
        <position position="2"/>
    </location>
</feature>
<feature type="lipid moiety-binding region" description="N6-myristoyl lysine" evidence="2">
    <location>
        <position position="19"/>
    </location>
</feature>
<feature type="lipid moiety-binding region" description="N6-myristoyl lysine" evidence="2">
    <location>
        <position position="20"/>
    </location>
</feature>
<feature type="glycosylation site" description="O-linked (GalNAc...) serine; in soluble form" evidence="1">
    <location>
        <position position="83"/>
    </location>
</feature>
<feature type="glycosylation site" description="N-linked (GlcNAc...) asparagine" evidence="4">
    <location>
        <position position="86"/>
    </location>
</feature>
<feature type="disulfide bond" evidence="5">
    <location>
        <begin position="148"/>
        <end position="179"/>
    </location>
</feature>
<feature type="sequence variant" evidence="7">
    <original>L</original>
    <variation>P</variation>
    <location>
        <position position="122"/>
    </location>
</feature>
<feature type="sequence variant" evidence="7">
    <original>K</original>
    <variation>E</variation>
    <location>
        <position position="190"/>
    </location>
</feature>
<feature type="sequence conflict" description="In Ref. 2; CAA05290/CAA47146." evidence="8" ref="2">
    <original>L</original>
    <variation>P</variation>
    <location>
        <position position="39"/>
    </location>
</feature>
<feature type="sequence conflict" description="In Ref. 2; CAA05290/CAA47146." evidence="8" ref="2">
    <original>I</original>
    <variation>T</variation>
    <location>
        <position position="163"/>
    </location>
</feature>
<feature type="sequence conflict" description="In Ref. 2; CAA05290/CAA47146." evidence="8" ref="2">
    <original>F</original>
    <variation>S</variation>
    <location>
        <position position="202"/>
    </location>
</feature>
<proteinExistence type="evidence at transcript level"/>
<comment type="function">
    <text evidence="2 3">Cytokine that binds to TNFRSF1A/TNFR1 and TNFRSF1B/TNFBR. It is mainly secreted by macrophages and can induce cell death of certain tumor cell lines. It is potent pyrogen causing fever by direct action or by stimulation of interleukin-1 secretion and is implicated in the induction of cachexia, Under certain conditions it can stimulate cell proliferation and induce cell differentiation (By similarity). Induces insulin resistance in adipocytes via inhibition of insulin-induced IRS1 tyrosine phosphorylation and insulin-induced glucose uptake. Induces GKAP42 protein degradation in adipocytes which is partially responsible for TNF-induced insulin resistance (By similarity). Plays a role in angiogenesis by inducing VEGF production synergistically with IL1B and IL6 (By similarity). Promotes osteoclastogenesis and therefore mediates bone resorption (By similarity).</text>
</comment>
<comment type="function">
    <text evidence="2">The TNF intracellular domain (ICD) form induces IL12 production in dendritic cells.</text>
</comment>
<comment type="subunit">
    <text evidence="1">Homotrimer. Interacts with SPPL2B (By similarity).</text>
</comment>
<comment type="subcellular location">
    <subcellularLocation>
        <location evidence="1">Cell membrane</location>
        <topology evidence="1">Single-pass type II membrane protein</topology>
    </subcellularLocation>
</comment>
<comment type="subcellular location">
    <molecule>Tumor necrosis factor, membrane form</molecule>
    <subcellularLocation>
        <location evidence="1">Membrane</location>
        <topology evidence="1">Single-pass type II membrane protein</topology>
    </subcellularLocation>
</comment>
<comment type="subcellular location">
    <molecule>Tumor necrosis factor, soluble form</molecule>
    <subcellularLocation>
        <location evidence="1">Secreted</location>
    </subcellularLocation>
</comment>
<comment type="subcellular location">
    <molecule>C-domain 1</molecule>
    <subcellularLocation>
        <location evidence="1">Secreted</location>
    </subcellularLocation>
</comment>
<comment type="subcellular location">
    <molecule>C-domain 2</molecule>
    <subcellularLocation>
        <location evidence="1">Secreted</location>
    </subcellularLocation>
</comment>
<comment type="induction">
    <text evidence="6">Induced by lipopolysaccharides.</text>
</comment>
<comment type="PTM">
    <text evidence="1">The soluble form derives from the membrane form by proteolytic processing. The membrane-bound form is further proteolytically processed by SPPL2A or SPPL2B through regulated intramembrane proteolysis producing TNF intracellular domains (ICD1 and ICD2) released in the cytosol and TNF C-domain 1 and C-domain 2 secreted into the extracellular space (By similarity).</text>
</comment>
<comment type="PTM">
    <text evidence="1">The membrane form, but not the soluble form, is phosphorylated on serine residues. Dephosphorylation of the membrane form occurs by binding to soluble TNFRSF1A/TNFR1 (By similarity).</text>
</comment>
<comment type="PTM">
    <text evidence="1">O-glycosylated; glycans contain galactose, N-acetylgalactosamine and N-acetylneuraminic acid.</text>
</comment>
<comment type="PTM">
    <molecule>Tumor necrosis factor, soluble form</molecule>
    <text evidence="2">The soluble form is demyristoylated by SIRT6, promoting its secretion.</text>
</comment>
<comment type="similarity">
    <text evidence="8">Belongs to the tumor necrosis factor family.</text>
</comment>
<protein>
    <recommendedName>
        <fullName>Tumor necrosis factor</fullName>
    </recommendedName>
    <alternativeName>
        <fullName>Cachectin</fullName>
    </alternativeName>
    <alternativeName>
        <fullName>TNF-alpha</fullName>
    </alternativeName>
    <alternativeName>
        <fullName>Tumor necrosis factor ligand superfamily member 2</fullName>
        <shortName>TNF-a</shortName>
    </alternativeName>
    <component>
        <recommendedName>
            <fullName>Tumor necrosis factor, membrane form</fullName>
        </recommendedName>
        <alternativeName>
            <fullName>N-terminal fragment</fullName>
            <shortName>NTF</shortName>
        </alternativeName>
    </component>
    <component>
        <recommendedName>
            <fullName>Intracellular domain 1</fullName>
            <shortName>ICD1</shortName>
        </recommendedName>
    </component>
    <component>
        <recommendedName>
            <fullName>Intracellular domain 2</fullName>
            <shortName>ICD2</shortName>
        </recommendedName>
    </component>
    <component>
        <recommendedName>
            <fullName>C-domain 1</fullName>
        </recommendedName>
    </component>
    <component>
        <recommendedName>
            <fullName>C-domain 2</fullName>
        </recommendedName>
    </component>
    <component>
        <recommendedName>
            <fullName>Tumor necrosis factor, soluble form</fullName>
        </recommendedName>
    </component>
</protein>
<reference key="1">
    <citation type="journal article" date="1989" name="Agric. Biol. Chem.">
        <title>Cloning and expression in Escherichia coli of the gene for rat tumor necrosis factor.</title>
        <authorList>
            <person name="Shirai T."/>
            <person name="Shimizu N."/>
            <person name="Horiguchi S."/>
            <person name="Ito H."/>
        </authorList>
    </citation>
    <scope>NUCLEOTIDE SEQUENCE [GENOMIC DNA]</scope>
</reference>
<reference key="2">
    <citation type="journal article" date="1992" name="Biol. Chem. Hoppe-Seyler">
        <title>Rat tumor necrosis factor-alpha. Transcription in rat Kupffer cells and in vitro posttranslational processing based on a PCR-derived cDNA.</title>
        <authorList>
            <person name="Estler H.C."/>
            <person name="Grewe M."/>
            <person name="Gaussling R."/>
            <person name="Pavlovic M."/>
            <person name="Decker K.F."/>
        </authorList>
    </citation>
    <scope>NUCLEOTIDE SEQUENCE [MRNA]</scope>
</reference>
<reference key="3">
    <citation type="journal article" date="1993" name="Gene">
        <title>Cloning and sequence analysis of the rat tumor necrosis factor-encoding genes.</title>
        <authorList>
            <person name="Kwon J."/>
            <person name="Chung I.Y."/>
            <person name="Benveniste E.N."/>
        </authorList>
    </citation>
    <scope>NUCLEOTIDE SEQUENCE [GENOMIC DNA]</scope>
    <source>
        <strain>Sprague-Dawley</strain>
        <tissue>Testis</tissue>
    </source>
</reference>
<reference key="4">
    <citation type="journal article" date="2001" name="Genes Immun.">
        <title>Polymorphisms of the tumor necrosis factor alpha locus among autoimmune disease susceptible and resistant inbred rat strains.</title>
        <authorList>
            <person name="Furuya T."/>
            <person name="Joe B."/>
            <person name="Salstrom J.L."/>
            <person name="Hashiramoto A."/>
            <person name="Dobbins D.E."/>
            <person name="Wilder R.L."/>
            <person name="Remmers E.F."/>
        </authorList>
    </citation>
    <scope>NUCLEOTIDE SEQUENCE [GENOMIC DNA]</scope>
    <source>
        <strain>ACI/SegHsd</strain>
        <strain>BB(DR)/Wor</strain>
        <strain>Brown Norway/SsNHsd</strain>
        <strain>DA/Bkl</strain>
        <strain>F344/NHsd</strain>
        <strain>LEW/NHsd</strain>
    </source>
</reference>
<reference key="5">
    <citation type="submission" date="2000-05" db="EMBL/GenBank/DDBJ databases">
        <title>TNF-alpha polymorphism in rats with collagen-induced arthritis.</title>
        <authorList>
            <person name="Seidel M.F."/>
            <person name="Junier M.-P."/>
            <person name="Vetter H."/>
        </authorList>
    </citation>
    <scope>NUCLEOTIDE SEQUENCE [MRNA]</scope>
    <scope>VARIANTS PRO-122 AND GLU-190</scope>
    <source>
        <strain>Dark agouti</strain>
    </source>
</reference>
<reference key="6">
    <citation type="journal article" date="2005" name="Transpl. Immunol.">
        <title>No association between tumor necrosis factor-alpha production and gene polymorphisms among inbred rat strains.</title>
        <authorList>
            <person name="Warle M.C."/>
            <person name="van der Laan L.J."/>
            <person name="Kusters J.G."/>
            <person name="Pot R.G."/>
            <person name="Hop W.C."/>
            <person name="Segeren K.C."/>
            <person name="Ijzermans J.N."/>
            <person name="Metselaar H.J."/>
            <person name="Tilanus H.W."/>
        </authorList>
    </citation>
    <scope>NUCLEOTIDE SEQUENCE [MRNA]</scope>
    <source>
        <strain>AUG/OlaHsd</strain>
        <strain>PVG/OlaHsd</strain>
        <strain>WF/HanHsd</strain>
    </source>
</reference>
<reference key="7">
    <citation type="journal article" date="2004" name="Genome Res.">
        <title>The genomic sequence and comparative analysis of the rat major histocompatibility complex.</title>
        <authorList>
            <person name="Hurt P."/>
            <person name="Walter L."/>
            <person name="Sudbrak R."/>
            <person name="Klages S."/>
            <person name="Mueller I."/>
            <person name="Shiina T."/>
            <person name="Inoko H."/>
            <person name="Lehrach H."/>
            <person name="Guenther E."/>
            <person name="Reinhardt R."/>
            <person name="Himmelbauer H."/>
        </authorList>
    </citation>
    <scope>NUCLEOTIDE SEQUENCE [LARGE SCALE GENOMIC DNA]</scope>
    <source>
        <strain>Brown Norway</strain>
    </source>
</reference>
<reference key="8">
    <citation type="journal article" date="2004" name="Genome Res.">
        <title>The status, quality, and expansion of the NIH full-length cDNA project: the Mammalian Gene Collection (MGC).</title>
        <authorList>
            <consortium name="The MGC Project Team"/>
        </authorList>
    </citation>
    <scope>NUCLEOTIDE SEQUENCE [LARGE SCALE MRNA]</scope>
    <source>
        <tissue>Prostate</tissue>
    </source>
</reference>
<reference key="9">
    <citation type="submission" date="1993-06" db="EMBL/GenBank/DDBJ databases">
        <title>Mapping of the TNF-alpha locus in the rat.</title>
        <authorList>
            <person name="Kirisits M.J."/>
            <person name="Vardimon D."/>
            <person name="Kunz H.W."/>
            <person name="Gill T.J. III"/>
        </authorList>
    </citation>
    <scope>NUCLEOTIDE SEQUENCE [GENOMIC DNA] OF 1-231</scope>
    <source>
        <tissue>Tail</tissue>
    </source>
</reference>
<reference key="10">
    <citation type="journal article" date="2019" name="J. Cell. Physiol.">
        <title>CHIP attenuates lipopolysaccharide-induced cardiac hypertrophy and apoptosis by promoting NFATc3 proteasomal degradation.</title>
        <authorList>
            <person name="Chao C.N."/>
            <person name="Lai C.H."/>
            <person name="Badrealam K.F."/>
            <person name="Lo J.F."/>
            <person name="Shen C.Y."/>
            <person name="Chen C.H."/>
            <person name="Chen R.J."/>
            <person name="Viswanadha V.P."/>
            <person name="Kuo W.W."/>
            <person name="Huang C.Y."/>
        </authorList>
    </citation>
    <scope>INDUCTION BY LIPOPOLYSACCHARIDES</scope>
</reference>
<organism>
    <name type="scientific">Rattus norvegicus</name>
    <name type="common">Rat</name>
    <dbReference type="NCBI Taxonomy" id="10116"/>
    <lineage>
        <taxon>Eukaryota</taxon>
        <taxon>Metazoa</taxon>
        <taxon>Chordata</taxon>
        <taxon>Craniata</taxon>
        <taxon>Vertebrata</taxon>
        <taxon>Euteleostomi</taxon>
        <taxon>Mammalia</taxon>
        <taxon>Eutheria</taxon>
        <taxon>Euarchontoglires</taxon>
        <taxon>Glires</taxon>
        <taxon>Rodentia</taxon>
        <taxon>Myomorpha</taxon>
        <taxon>Muroidea</taxon>
        <taxon>Muridae</taxon>
        <taxon>Murinae</taxon>
        <taxon>Rattus</taxon>
    </lineage>
</organism>
<sequence>MSTESMIRDVELAEEALPKKMGGLQNSRRCLCLSLFSFLLVAGATTLFCLLNFGVIGPNKEEKFPNGLPLISSMAQTLTLRSSSQNSSDKPVAHVVANHQAEEQLEWLSQRANALLANGMDLKDNQLVVPADGLYLIYSQVLFKGQGCPDYVLLTHTVSRFAISYQEKVSLLSAIKSPCPKDTPEGAELKPWYEPMYLGGVFQLEKGDLLSAEVNLPKYLDITESGQVYFGVIAL</sequence>
<evidence type="ECO:0000250" key="1"/>
<evidence type="ECO:0000250" key="2">
    <source>
        <dbReference type="UniProtKB" id="P01375"/>
    </source>
</evidence>
<evidence type="ECO:0000250" key="3">
    <source>
        <dbReference type="UniProtKB" id="P06804"/>
    </source>
</evidence>
<evidence type="ECO:0000255" key="4"/>
<evidence type="ECO:0000255" key="5">
    <source>
        <dbReference type="PROSITE-ProRule" id="PRU01387"/>
    </source>
</evidence>
<evidence type="ECO:0000269" key="6">
    <source>
    </source>
</evidence>
<evidence type="ECO:0000269" key="7">
    <source ref="5"/>
</evidence>
<evidence type="ECO:0000305" key="8"/>
<accession>P16599</accession>
<accession>Q6EE11</accession>
<accession>Q9JI26</accession>
<accession>Q9JI27</accession>
<gene>
    <name type="primary">Tnf</name>
    <name type="synonym">Tnfa</name>
    <name type="synonym">Tnfsf2</name>
</gene>